<evidence type="ECO:0000255" key="1">
    <source>
        <dbReference type="HAMAP-Rule" id="MF_00219"/>
    </source>
</evidence>
<accession>B6JLG3</accession>
<gene>
    <name evidence="1" type="primary">pyrC</name>
    <name type="ordered locus">HPP12_0587</name>
</gene>
<reference key="1">
    <citation type="submission" date="2008-10" db="EMBL/GenBank/DDBJ databases">
        <title>The complete genome sequence of Helicobacter pylori strain P12.</title>
        <authorList>
            <person name="Fischer W."/>
            <person name="Windhager L."/>
            <person name="Karnholz A."/>
            <person name="Zeiller M."/>
            <person name="Zimmer R."/>
            <person name="Haas R."/>
        </authorList>
    </citation>
    <scope>NUCLEOTIDE SEQUENCE [LARGE SCALE GENOMIC DNA]</scope>
    <source>
        <strain>P12</strain>
    </source>
</reference>
<name>PYRC_HELP2</name>
<dbReference type="EC" id="3.5.2.3" evidence="1"/>
<dbReference type="EMBL" id="CP001217">
    <property type="protein sequence ID" value="ACJ07741.1"/>
    <property type="molecule type" value="Genomic_DNA"/>
</dbReference>
<dbReference type="SMR" id="B6JLG3"/>
<dbReference type="KEGG" id="hpp:HPP12_0587"/>
<dbReference type="HOGENOM" id="CLU_041558_0_0_7"/>
<dbReference type="UniPathway" id="UPA00070">
    <property type="reaction ID" value="UER00117"/>
</dbReference>
<dbReference type="Proteomes" id="UP000008198">
    <property type="component" value="Chromosome"/>
</dbReference>
<dbReference type="GO" id="GO:0005829">
    <property type="term" value="C:cytosol"/>
    <property type="evidence" value="ECO:0007669"/>
    <property type="project" value="TreeGrafter"/>
</dbReference>
<dbReference type="GO" id="GO:0004151">
    <property type="term" value="F:dihydroorotase activity"/>
    <property type="evidence" value="ECO:0007669"/>
    <property type="project" value="UniProtKB-UniRule"/>
</dbReference>
<dbReference type="GO" id="GO:0008270">
    <property type="term" value="F:zinc ion binding"/>
    <property type="evidence" value="ECO:0007669"/>
    <property type="project" value="UniProtKB-UniRule"/>
</dbReference>
<dbReference type="GO" id="GO:0006207">
    <property type="term" value="P:'de novo' pyrimidine nucleobase biosynthetic process"/>
    <property type="evidence" value="ECO:0007669"/>
    <property type="project" value="TreeGrafter"/>
</dbReference>
<dbReference type="GO" id="GO:0044205">
    <property type="term" value="P:'de novo' UMP biosynthetic process"/>
    <property type="evidence" value="ECO:0007669"/>
    <property type="project" value="UniProtKB-UniRule"/>
</dbReference>
<dbReference type="CDD" id="cd01294">
    <property type="entry name" value="DHOase"/>
    <property type="match status" value="1"/>
</dbReference>
<dbReference type="FunFam" id="3.20.20.140:FF:000110">
    <property type="entry name" value="Dihydroorotase"/>
    <property type="match status" value="1"/>
</dbReference>
<dbReference type="Gene3D" id="3.20.20.140">
    <property type="entry name" value="Metal-dependent hydrolases"/>
    <property type="match status" value="1"/>
</dbReference>
<dbReference type="HAMAP" id="MF_00219">
    <property type="entry name" value="PyrC_classII"/>
    <property type="match status" value="1"/>
</dbReference>
<dbReference type="InterPro" id="IPR004721">
    <property type="entry name" value="DHOdimr"/>
</dbReference>
<dbReference type="InterPro" id="IPR002195">
    <property type="entry name" value="Dihydroorotase_CS"/>
</dbReference>
<dbReference type="InterPro" id="IPR032466">
    <property type="entry name" value="Metal_Hydrolase"/>
</dbReference>
<dbReference type="NCBIfam" id="TIGR00856">
    <property type="entry name" value="pyrC_dimer"/>
    <property type="match status" value="1"/>
</dbReference>
<dbReference type="PANTHER" id="PTHR43137">
    <property type="entry name" value="DIHYDROOROTASE"/>
    <property type="match status" value="1"/>
</dbReference>
<dbReference type="PANTHER" id="PTHR43137:SF1">
    <property type="entry name" value="DIHYDROOROTASE"/>
    <property type="match status" value="1"/>
</dbReference>
<dbReference type="PIRSF" id="PIRSF001237">
    <property type="entry name" value="DHOdimr"/>
    <property type="match status" value="1"/>
</dbReference>
<dbReference type="SUPFAM" id="SSF51556">
    <property type="entry name" value="Metallo-dependent hydrolases"/>
    <property type="match status" value="1"/>
</dbReference>
<dbReference type="PROSITE" id="PS00482">
    <property type="entry name" value="DIHYDROOROTASE_1"/>
    <property type="match status" value="1"/>
</dbReference>
<dbReference type="PROSITE" id="PS00483">
    <property type="entry name" value="DIHYDROOROTASE_2"/>
    <property type="match status" value="1"/>
</dbReference>
<proteinExistence type="inferred from homology"/>
<organism>
    <name type="scientific">Helicobacter pylori (strain P12)</name>
    <dbReference type="NCBI Taxonomy" id="570508"/>
    <lineage>
        <taxon>Bacteria</taxon>
        <taxon>Pseudomonadati</taxon>
        <taxon>Campylobacterota</taxon>
        <taxon>Epsilonproteobacteria</taxon>
        <taxon>Campylobacterales</taxon>
        <taxon>Helicobacteraceae</taxon>
        <taxon>Helicobacter</taxon>
    </lineage>
</organism>
<comment type="function">
    <text evidence="1">Catalyzes the reversible cyclization of carbamoyl aspartate to dihydroorotate.</text>
</comment>
<comment type="catalytic activity">
    <reaction evidence="1">
        <text>(S)-dihydroorotate + H2O = N-carbamoyl-L-aspartate + H(+)</text>
        <dbReference type="Rhea" id="RHEA:24296"/>
        <dbReference type="ChEBI" id="CHEBI:15377"/>
        <dbReference type="ChEBI" id="CHEBI:15378"/>
        <dbReference type="ChEBI" id="CHEBI:30864"/>
        <dbReference type="ChEBI" id="CHEBI:32814"/>
        <dbReference type="EC" id="3.5.2.3"/>
    </reaction>
</comment>
<comment type="cofactor">
    <cofactor evidence="1">
        <name>Zn(2+)</name>
        <dbReference type="ChEBI" id="CHEBI:29105"/>
    </cofactor>
    <text evidence="1">Binds 2 Zn(2+) ions per subunit.</text>
</comment>
<comment type="pathway">
    <text evidence="1">Pyrimidine metabolism; UMP biosynthesis via de novo pathway; (S)-dihydroorotate from bicarbonate: step 3/3.</text>
</comment>
<comment type="subunit">
    <text evidence="1">Homodimer.</text>
</comment>
<comment type="similarity">
    <text evidence="1">Belongs to the metallo-dependent hydrolases superfamily. DHOase family. Class II DHOase subfamily.</text>
</comment>
<feature type="chain" id="PRO_1000100045" description="Dihydroorotase">
    <location>
        <begin position="1"/>
        <end position="339"/>
    </location>
</feature>
<feature type="active site" evidence="1">
    <location>
        <position position="239"/>
    </location>
</feature>
<feature type="binding site" evidence="1">
    <location>
        <position position="12"/>
    </location>
    <ligand>
        <name>Zn(2+)</name>
        <dbReference type="ChEBI" id="CHEBI:29105"/>
        <label>1</label>
    </ligand>
</feature>
<feature type="binding site" evidence="1">
    <location>
        <begin position="14"/>
        <end position="16"/>
    </location>
    <ligand>
        <name>substrate</name>
    </ligand>
</feature>
<feature type="binding site" evidence="1">
    <location>
        <position position="14"/>
    </location>
    <ligand>
        <name>Zn(2+)</name>
        <dbReference type="ChEBI" id="CHEBI:29105"/>
        <label>1</label>
    </ligand>
</feature>
<feature type="binding site" evidence="1">
    <location>
        <position position="40"/>
    </location>
    <ligand>
        <name>substrate</name>
    </ligand>
</feature>
<feature type="binding site" description="via carbamate group" evidence="1">
    <location>
        <position position="94"/>
    </location>
    <ligand>
        <name>Zn(2+)</name>
        <dbReference type="ChEBI" id="CHEBI:29105"/>
        <label>1</label>
    </ligand>
</feature>
<feature type="binding site" description="via carbamate group" evidence="1">
    <location>
        <position position="94"/>
    </location>
    <ligand>
        <name>Zn(2+)</name>
        <dbReference type="ChEBI" id="CHEBI:29105"/>
        <label>2</label>
    </ligand>
</feature>
<feature type="binding site" evidence="1">
    <location>
        <position position="133"/>
    </location>
    <ligand>
        <name>substrate</name>
    </ligand>
</feature>
<feature type="binding site" evidence="1">
    <location>
        <position position="133"/>
    </location>
    <ligand>
        <name>Zn(2+)</name>
        <dbReference type="ChEBI" id="CHEBI:29105"/>
        <label>2</label>
    </ligand>
</feature>
<feature type="binding site" evidence="1">
    <location>
        <position position="167"/>
    </location>
    <ligand>
        <name>Zn(2+)</name>
        <dbReference type="ChEBI" id="CHEBI:29105"/>
        <label>2</label>
    </ligand>
</feature>
<feature type="binding site" evidence="1">
    <location>
        <position position="239"/>
    </location>
    <ligand>
        <name>Zn(2+)</name>
        <dbReference type="ChEBI" id="CHEBI:29105"/>
        <label>1</label>
    </ligand>
</feature>
<feature type="binding site" evidence="1">
    <location>
        <position position="243"/>
    </location>
    <ligand>
        <name>substrate</name>
    </ligand>
</feature>
<feature type="binding site" evidence="1">
    <location>
        <position position="255"/>
    </location>
    <ligand>
        <name>substrate</name>
    </ligand>
</feature>
<feature type="modified residue" description="N6-carboxylysine" evidence="1">
    <location>
        <position position="94"/>
    </location>
</feature>
<keyword id="KW-0378">Hydrolase</keyword>
<keyword id="KW-0479">Metal-binding</keyword>
<keyword id="KW-0665">Pyrimidine biosynthesis</keyword>
<keyword id="KW-0862">Zinc</keyword>
<sequence>MEITLFDPIDAHLHVRENALLKAVLRYSSEPFSAAVIMPNLSKPLTDTPTTLEYEEEILNHSSNFKPLMSLYFNDDLTLEELQRAHEKGIRFLKLYPKGMTTNAQNGTSDLLGEKTLEILENAQKLGFILCIHAEQAGFCLDKEFLCHSVLETFALSFPKLKIIIEHLSDWRSIALIEKHANLYATLTLHHISMTLDDLLGGSLNPHCFCKPLIKTKKDQERLLSLALKAHPKISFGSDSAPHFISKKHSTSIPAGIFSAPILLPALCELFEKHNALENLQAFISDNAKKIYALDNLPAKKARLSKKPFIVPTHALCLNEKIAILRGGETLSWNLQEIA</sequence>
<protein>
    <recommendedName>
        <fullName evidence="1">Dihydroorotase</fullName>
        <shortName evidence="1">DHOase</shortName>
        <ecNumber evidence="1">3.5.2.3</ecNumber>
    </recommendedName>
</protein>